<sequence length="268" mass="30337">MSGKHYKGPEVSCCIKYFIFGFNVIFWFLGITFLGIGLWAWNEKGVLSNISSITDLGGFDPVWLFLVVGGVMFILGFAGCIGALRENTFLLKFFSVFLGIIFFLELTAGVLAFVFKDWIKDQLYFFINNNIRAYRDDIDLQNLIDFTQEYWQCCGAFGADDWNLNIYFNCTDSNASRERCGVPFSCCTKDPAEDVINTQCGYDARQKPEVDQQIVIYTKGCVPQFEKWLQDNLTIVAGIFIGIALLQIFGICLAQNLVSDIEAVRASW</sequence>
<keyword id="KW-1003">Cell membrane</keyword>
<keyword id="KW-1015">Disulfide bond</keyword>
<keyword id="KW-0325">Glycoprotein</keyword>
<keyword id="KW-0472">Membrane</keyword>
<keyword id="KW-1267">Proteomics identification</keyword>
<keyword id="KW-1185">Reference proteome</keyword>
<keyword id="KW-0812">Transmembrane</keyword>
<keyword id="KW-1133">Transmembrane helix</keyword>
<reference key="1">
    <citation type="journal article" date="1998" name="Biochim. Biophys. Acta">
        <title>Sequences and expression of six new members of the tetraspanin/TM4SF family.</title>
        <authorList>
            <person name="Todd S.C."/>
            <person name="Doctor V.S."/>
            <person name="Levy S."/>
        </authorList>
    </citation>
    <scope>NUCLEOTIDE SEQUENCE [GENOMIC DNA]</scope>
</reference>
<reference key="2">
    <citation type="submission" date="1998-05" db="EMBL/GenBank/DDBJ databases">
        <title>New tetraspans identified in the EST database.</title>
        <authorList>
            <person name="Rubinstein E."/>
            <person name="Serru V."/>
            <person name="Boucheix C."/>
        </authorList>
    </citation>
    <scope>NUCLEOTIDE SEQUENCE [MRNA]</scope>
</reference>
<reference key="3">
    <citation type="submission" date="2004-06" db="EMBL/GenBank/DDBJ databases">
        <title>Cloning of human full open reading frames in Gateway(TM) system entry vector (pDONR201).</title>
        <authorList>
            <person name="Halleck A."/>
            <person name="Ebert L."/>
            <person name="Mkoundinya M."/>
            <person name="Schick M."/>
            <person name="Eisenstein S."/>
            <person name="Neubert P."/>
            <person name="Kstrang K."/>
            <person name="Schatten R."/>
            <person name="Shen B."/>
            <person name="Henze S."/>
            <person name="Mar W."/>
            <person name="Korn B."/>
            <person name="Zuo D."/>
            <person name="Hu Y."/>
            <person name="LaBaer J."/>
        </authorList>
    </citation>
    <scope>NUCLEOTIDE SEQUENCE [LARGE SCALE MRNA]</scope>
</reference>
<reference key="4">
    <citation type="journal article" date="2004" name="Nat. Genet.">
        <title>Complete sequencing and characterization of 21,243 full-length human cDNAs.</title>
        <authorList>
            <person name="Ota T."/>
            <person name="Suzuki Y."/>
            <person name="Nishikawa T."/>
            <person name="Otsuki T."/>
            <person name="Sugiyama T."/>
            <person name="Irie R."/>
            <person name="Wakamatsu A."/>
            <person name="Hayashi K."/>
            <person name="Sato H."/>
            <person name="Nagai K."/>
            <person name="Kimura K."/>
            <person name="Makita H."/>
            <person name="Sekine M."/>
            <person name="Obayashi M."/>
            <person name="Nishi T."/>
            <person name="Shibahara T."/>
            <person name="Tanaka T."/>
            <person name="Ishii S."/>
            <person name="Yamamoto J."/>
            <person name="Saito K."/>
            <person name="Kawai Y."/>
            <person name="Isono Y."/>
            <person name="Nakamura Y."/>
            <person name="Nagahari K."/>
            <person name="Murakami K."/>
            <person name="Yasuda T."/>
            <person name="Iwayanagi T."/>
            <person name="Wagatsuma M."/>
            <person name="Shiratori A."/>
            <person name="Sudo H."/>
            <person name="Hosoiri T."/>
            <person name="Kaku Y."/>
            <person name="Kodaira H."/>
            <person name="Kondo H."/>
            <person name="Sugawara M."/>
            <person name="Takahashi M."/>
            <person name="Kanda K."/>
            <person name="Yokoi T."/>
            <person name="Furuya T."/>
            <person name="Kikkawa E."/>
            <person name="Omura Y."/>
            <person name="Abe K."/>
            <person name="Kamihara K."/>
            <person name="Katsuta N."/>
            <person name="Sato K."/>
            <person name="Tanikawa M."/>
            <person name="Yamazaki M."/>
            <person name="Ninomiya K."/>
            <person name="Ishibashi T."/>
            <person name="Yamashita H."/>
            <person name="Murakawa K."/>
            <person name="Fujimori K."/>
            <person name="Tanai H."/>
            <person name="Kimata M."/>
            <person name="Watanabe M."/>
            <person name="Hiraoka S."/>
            <person name="Chiba Y."/>
            <person name="Ishida S."/>
            <person name="Ono Y."/>
            <person name="Takiguchi S."/>
            <person name="Watanabe S."/>
            <person name="Yosida M."/>
            <person name="Hotuta T."/>
            <person name="Kusano J."/>
            <person name="Kanehori K."/>
            <person name="Takahashi-Fujii A."/>
            <person name="Hara H."/>
            <person name="Tanase T.-O."/>
            <person name="Nomura Y."/>
            <person name="Togiya S."/>
            <person name="Komai F."/>
            <person name="Hara R."/>
            <person name="Takeuchi K."/>
            <person name="Arita M."/>
            <person name="Imose N."/>
            <person name="Musashino K."/>
            <person name="Yuuki H."/>
            <person name="Oshima A."/>
            <person name="Sasaki N."/>
            <person name="Aotsuka S."/>
            <person name="Yoshikawa Y."/>
            <person name="Matsunawa H."/>
            <person name="Ichihara T."/>
            <person name="Shiohata N."/>
            <person name="Sano S."/>
            <person name="Moriya S."/>
            <person name="Momiyama H."/>
            <person name="Satoh N."/>
            <person name="Takami S."/>
            <person name="Terashima Y."/>
            <person name="Suzuki O."/>
            <person name="Nakagawa S."/>
            <person name="Senoh A."/>
            <person name="Mizoguchi H."/>
            <person name="Goto Y."/>
            <person name="Shimizu F."/>
            <person name="Wakebe H."/>
            <person name="Hishigaki H."/>
            <person name="Watanabe T."/>
            <person name="Sugiyama A."/>
            <person name="Takemoto M."/>
            <person name="Kawakami B."/>
            <person name="Yamazaki M."/>
            <person name="Watanabe K."/>
            <person name="Kumagai A."/>
            <person name="Itakura S."/>
            <person name="Fukuzumi Y."/>
            <person name="Fujimori Y."/>
            <person name="Komiyama M."/>
            <person name="Tashiro H."/>
            <person name="Tanigami A."/>
            <person name="Fujiwara T."/>
            <person name="Ono T."/>
            <person name="Yamada K."/>
            <person name="Fujii Y."/>
            <person name="Ozaki K."/>
            <person name="Hirao M."/>
            <person name="Ohmori Y."/>
            <person name="Kawabata A."/>
            <person name="Hikiji T."/>
            <person name="Kobatake N."/>
            <person name="Inagaki H."/>
            <person name="Ikema Y."/>
            <person name="Okamoto S."/>
            <person name="Okitani R."/>
            <person name="Kawakami T."/>
            <person name="Noguchi S."/>
            <person name="Itoh T."/>
            <person name="Shigeta K."/>
            <person name="Senba T."/>
            <person name="Matsumura K."/>
            <person name="Nakajima Y."/>
            <person name="Mizuno T."/>
            <person name="Morinaga M."/>
            <person name="Sasaki M."/>
            <person name="Togashi T."/>
            <person name="Oyama M."/>
            <person name="Hata H."/>
            <person name="Watanabe M."/>
            <person name="Komatsu T."/>
            <person name="Mizushima-Sugano J."/>
            <person name="Satoh T."/>
            <person name="Shirai Y."/>
            <person name="Takahashi Y."/>
            <person name="Nakagawa K."/>
            <person name="Okumura K."/>
            <person name="Nagase T."/>
            <person name="Nomura N."/>
            <person name="Kikuchi H."/>
            <person name="Masuho Y."/>
            <person name="Yamashita R."/>
            <person name="Nakai K."/>
            <person name="Yada T."/>
            <person name="Nakamura Y."/>
            <person name="Ohara O."/>
            <person name="Isogai T."/>
            <person name="Sugano S."/>
        </authorList>
    </citation>
    <scope>NUCLEOTIDE SEQUENCE [LARGE SCALE MRNA]</scope>
    <source>
        <tissue>Testis</tissue>
    </source>
</reference>
<reference key="5">
    <citation type="submission" date="2005-07" db="EMBL/GenBank/DDBJ databases">
        <authorList>
            <person name="Mural R.J."/>
            <person name="Istrail S."/>
            <person name="Sutton G.G."/>
            <person name="Florea L."/>
            <person name="Halpern A.L."/>
            <person name="Mobarry C.M."/>
            <person name="Lippert R."/>
            <person name="Walenz B."/>
            <person name="Shatkay H."/>
            <person name="Dew I."/>
            <person name="Miller J.R."/>
            <person name="Flanigan M.J."/>
            <person name="Edwards N.J."/>
            <person name="Bolanos R."/>
            <person name="Fasulo D."/>
            <person name="Halldorsson B.V."/>
            <person name="Hannenhalli S."/>
            <person name="Turner R."/>
            <person name="Yooseph S."/>
            <person name="Lu F."/>
            <person name="Nusskern D.R."/>
            <person name="Shue B.C."/>
            <person name="Zheng X.H."/>
            <person name="Zhong F."/>
            <person name="Delcher A.L."/>
            <person name="Huson D.H."/>
            <person name="Kravitz S.A."/>
            <person name="Mouchard L."/>
            <person name="Reinert K."/>
            <person name="Remington K.A."/>
            <person name="Clark A.G."/>
            <person name="Waterman M.S."/>
            <person name="Eichler E.E."/>
            <person name="Adams M.D."/>
            <person name="Hunkapiller M.W."/>
            <person name="Myers E.W."/>
            <person name="Venter J.C."/>
        </authorList>
    </citation>
    <scope>NUCLEOTIDE SEQUENCE [LARGE SCALE GENOMIC DNA]</scope>
</reference>
<reference key="6">
    <citation type="journal article" date="2004" name="Genome Res.">
        <title>The status, quality, and expansion of the NIH full-length cDNA project: the Mammalian Gene Collection (MGC).</title>
        <authorList>
            <consortium name="The MGC Project Team"/>
        </authorList>
    </citation>
    <scope>NUCLEOTIDE SEQUENCE [LARGE SCALE MRNA]</scope>
    <source>
        <tissue>Pancreas</tissue>
    </source>
</reference>
<reference key="7">
    <citation type="journal article" date="2016" name="Cell. Mol. Life Sci.">
        <title>TspanC8 tetraspanins differentially regulate the cleavage of ADAM10 substrates, Notch activation and ADAM10 membrane compartmentalization.</title>
        <authorList>
            <person name="Jouannet S."/>
            <person name="Saint-Pol J."/>
            <person name="Fernandez L."/>
            <person name="Nguyen V."/>
            <person name="Charrin S."/>
            <person name="Boucheix C."/>
            <person name="Brou C."/>
            <person name="Milhiet P.E."/>
            <person name="Rubinstein E."/>
        </authorList>
    </citation>
    <scope>FUNCTION</scope>
    <scope>INTERACTION WITH ADAM10</scope>
    <scope>SUBCELLULAR LOCATION</scope>
</reference>
<reference key="8">
    <citation type="journal article" date="2017" name="J. Immunol.">
        <title>ADAM10-Interacting Tetraspanins Tspan5 and Tspan17 Regulate VE-Cadherin Expression and Promote T Lymphocyte Transmigration.</title>
        <authorList>
            <person name="Reyat J.S."/>
            <person name="Chimen M."/>
            <person name="Noy P.J."/>
            <person name="Szyroka J."/>
            <person name="Rainger G.E."/>
            <person name="Tomlinson M.G."/>
        </authorList>
    </citation>
    <scope>FUNCTION</scope>
</reference>
<reference key="9">
    <citation type="journal article" date="2020" name="Life. Sci Alliance">
        <title>TspanC8 tetraspanins differentially regulate ADAM10 endocytosis and half-life.</title>
        <authorList>
            <person name="Eschenbrenner E."/>
            <person name="Jouannet S."/>
            <person name="Clay D."/>
            <person name="Chaker J."/>
            <person name="Boucheix C."/>
            <person name="Brou C."/>
            <person name="Tomlinson M.G."/>
            <person name="Charrin S."/>
            <person name="Rubinstein E."/>
        </authorList>
    </citation>
    <scope>FUNCTION</scope>
    <scope>INTERACTION WITH ADAM10</scope>
    <scope>SUBCELLULAR LOCATION</scope>
    <scope>PALMITOYLATION</scope>
</reference>
<reference key="10">
    <citation type="journal article" date="2023" name="Cell">
        <title>Structural basis for membrane-proximal proteolysis of substrates by ADAM10.</title>
        <authorList>
            <person name="Lipper C.H."/>
            <person name="Egan E.D."/>
            <person name="Gabriel K.H."/>
            <person name="Blacklow S.C."/>
        </authorList>
    </citation>
    <scope>FUNCTION</scope>
</reference>
<feature type="chain" id="PRO_0000219243" description="Tetraspanin-5">
    <location>
        <begin position="1"/>
        <end position="268"/>
    </location>
</feature>
<feature type="topological domain" description="Cytoplasmic" evidence="2">
    <location>
        <begin position="1"/>
        <end position="17"/>
    </location>
</feature>
<feature type="transmembrane region" description="Helical" evidence="2">
    <location>
        <begin position="18"/>
        <end position="38"/>
    </location>
</feature>
<feature type="topological domain" description="Extracellular" evidence="2">
    <location>
        <begin position="39"/>
        <end position="61"/>
    </location>
</feature>
<feature type="transmembrane region" description="Helical" evidence="2">
    <location>
        <begin position="62"/>
        <end position="82"/>
    </location>
</feature>
<feature type="topological domain" description="Cytoplasmic" evidence="2">
    <location>
        <begin position="83"/>
        <end position="92"/>
    </location>
</feature>
<feature type="transmembrane region" description="Helical" evidence="2">
    <location>
        <begin position="93"/>
        <end position="113"/>
    </location>
</feature>
<feature type="topological domain" description="Extracellular" evidence="2">
    <location>
        <begin position="114"/>
        <end position="232"/>
    </location>
</feature>
<feature type="transmembrane region" description="Helical" evidence="2">
    <location>
        <begin position="233"/>
        <end position="253"/>
    </location>
</feature>
<feature type="topological domain" description="Cytoplasmic" evidence="2">
    <location>
        <begin position="254"/>
        <end position="268"/>
    </location>
</feature>
<feature type="glycosylation site" description="N-linked (GlcNAc...) asparagine" evidence="2">
    <location>
        <position position="49"/>
    </location>
</feature>
<feature type="glycosylation site" description="N-linked (GlcNAc...) asparagine" evidence="2">
    <location>
        <position position="169"/>
    </location>
</feature>
<feature type="glycosylation site" description="N-linked (GlcNAc...) asparagine" evidence="2">
    <location>
        <position position="174"/>
    </location>
</feature>
<feature type="glycosylation site" description="N-linked (GlcNAc...) asparagine" evidence="2">
    <location>
        <position position="232"/>
    </location>
</feature>
<feature type="disulfide bond" evidence="1">
    <location>
        <begin position="153"/>
        <end position="221"/>
    </location>
</feature>
<feature type="disulfide bond" evidence="1">
    <location>
        <begin position="154"/>
        <end position="186"/>
    </location>
</feature>
<feature type="disulfide bond" evidence="1">
    <location>
        <begin position="170"/>
        <end position="180"/>
    </location>
</feature>
<feature type="disulfide bond" evidence="1">
    <location>
        <begin position="187"/>
        <end position="200"/>
    </location>
</feature>
<feature type="sequence conflict" description="In Ref. 1; AAC69712." evidence="7" ref="1">
    <location>
        <begin position="91"/>
        <end position="94"/>
    </location>
</feature>
<dbReference type="EMBL" id="AF053455">
    <property type="protein sequence ID" value="AAC69712.1"/>
    <property type="molecule type" value="Genomic_DNA"/>
</dbReference>
<dbReference type="EMBL" id="AF065389">
    <property type="protein sequence ID" value="AAC17120.1"/>
    <property type="molecule type" value="mRNA"/>
</dbReference>
<dbReference type="EMBL" id="CR541809">
    <property type="protein sequence ID" value="CAG46608.1"/>
    <property type="molecule type" value="mRNA"/>
</dbReference>
<dbReference type="EMBL" id="AK315723">
    <property type="protein sequence ID" value="BAG38079.1"/>
    <property type="molecule type" value="mRNA"/>
</dbReference>
<dbReference type="EMBL" id="CH471057">
    <property type="protein sequence ID" value="EAX06074.1"/>
    <property type="molecule type" value="Genomic_DNA"/>
</dbReference>
<dbReference type="EMBL" id="BC009704">
    <property type="protein sequence ID" value="AAH09704.1"/>
    <property type="molecule type" value="mRNA"/>
</dbReference>
<dbReference type="CCDS" id="CCDS3646.1"/>
<dbReference type="PIR" id="A59261">
    <property type="entry name" value="A59261"/>
</dbReference>
<dbReference type="RefSeq" id="NP_005714.2">
    <property type="nucleotide sequence ID" value="NM_005723.3"/>
</dbReference>
<dbReference type="SMR" id="P62079"/>
<dbReference type="BioGRID" id="115405">
    <property type="interactions" value="83"/>
</dbReference>
<dbReference type="FunCoup" id="P62079">
    <property type="interactions" value="589"/>
</dbReference>
<dbReference type="IntAct" id="P62079">
    <property type="interactions" value="102"/>
</dbReference>
<dbReference type="STRING" id="9606.ENSP00000307701"/>
<dbReference type="GlyCosmos" id="P62079">
    <property type="glycosylation" value="4 sites, No reported glycans"/>
</dbReference>
<dbReference type="GlyGen" id="P62079">
    <property type="glycosylation" value="4 sites"/>
</dbReference>
<dbReference type="iPTMnet" id="P62079"/>
<dbReference type="PhosphoSitePlus" id="P62079"/>
<dbReference type="SwissPalm" id="P62079"/>
<dbReference type="BioMuta" id="TSPAN5"/>
<dbReference type="DMDM" id="49065848"/>
<dbReference type="jPOST" id="P62079"/>
<dbReference type="MassIVE" id="P62079"/>
<dbReference type="PaxDb" id="9606-ENSP00000307701"/>
<dbReference type="PeptideAtlas" id="P62079"/>
<dbReference type="ProteomicsDB" id="57363"/>
<dbReference type="Antibodypedia" id="25821">
    <property type="antibodies" value="171 antibodies from 27 providers"/>
</dbReference>
<dbReference type="DNASU" id="10098"/>
<dbReference type="Ensembl" id="ENST00000305798.8">
    <property type="protein sequence ID" value="ENSP00000307701.3"/>
    <property type="gene ID" value="ENSG00000168785.8"/>
</dbReference>
<dbReference type="GeneID" id="10098"/>
<dbReference type="KEGG" id="hsa:10098"/>
<dbReference type="MANE-Select" id="ENST00000305798.8">
    <property type="protein sequence ID" value="ENSP00000307701.3"/>
    <property type="RefSeq nucleotide sequence ID" value="NM_005723.4"/>
    <property type="RefSeq protein sequence ID" value="NP_005714.2"/>
</dbReference>
<dbReference type="UCSC" id="uc003hub.4">
    <property type="organism name" value="human"/>
</dbReference>
<dbReference type="AGR" id="HGNC:17753"/>
<dbReference type="CTD" id="10098"/>
<dbReference type="DisGeNET" id="10098"/>
<dbReference type="GeneCards" id="TSPAN5"/>
<dbReference type="HGNC" id="HGNC:17753">
    <property type="gene designation" value="TSPAN5"/>
</dbReference>
<dbReference type="HPA" id="ENSG00000168785">
    <property type="expression patterns" value="Tissue enhanced (brain)"/>
</dbReference>
<dbReference type="MalaCards" id="TSPAN5"/>
<dbReference type="MIM" id="613136">
    <property type="type" value="gene"/>
</dbReference>
<dbReference type="neXtProt" id="NX_P62079"/>
<dbReference type="OpenTargets" id="ENSG00000168785"/>
<dbReference type="PharmGKB" id="PA134864098"/>
<dbReference type="VEuPathDB" id="HostDB:ENSG00000168785"/>
<dbReference type="eggNOG" id="KOG3882">
    <property type="taxonomic scope" value="Eukaryota"/>
</dbReference>
<dbReference type="GeneTree" id="ENSGT00940000161376"/>
<dbReference type="HOGENOM" id="CLU_055524_0_2_1"/>
<dbReference type="InParanoid" id="P62079"/>
<dbReference type="OMA" id="DPMYGFI"/>
<dbReference type="OrthoDB" id="2014092at2759"/>
<dbReference type="PAN-GO" id="P62079">
    <property type="GO annotations" value="3 GO annotations based on evolutionary models"/>
</dbReference>
<dbReference type="PhylomeDB" id="P62079"/>
<dbReference type="TreeFam" id="TF313002"/>
<dbReference type="PathwayCommons" id="P62079"/>
<dbReference type="Reactome" id="R-HSA-977225">
    <property type="pathway name" value="Amyloid fiber formation"/>
</dbReference>
<dbReference type="SignaLink" id="P62079"/>
<dbReference type="BioGRID-ORCS" id="10098">
    <property type="hits" value="11 hits in 1152 CRISPR screens"/>
</dbReference>
<dbReference type="ChiTaRS" id="TSPAN5">
    <property type="organism name" value="human"/>
</dbReference>
<dbReference type="GenomeRNAi" id="10098"/>
<dbReference type="Pharos" id="P62079">
    <property type="development level" value="Tbio"/>
</dbReference>
<dbReference type="PRO" id="PR:P62079"/>
<dbReference type="Proteomes" id="UP000005640">
    <property type="component" value="Chromosome 4"/>
</dbReference>
<dbReference type="RNAct" id="P62079">
    <property type="molecule type" value="protein"/>
</dbReference>
<dbReference type="Bgee" id="ENSG00000168785">
    <property type="expression patterns" value="Expressed in secondary oocyte and 192 other cell types or tissues"/>
</dbReference>
<dbReference type="ExpressionAtlas" id="P62079">
    <property type="expression patterns" value="baseline and differential"/>
</dbReference>
<dbReference type="GO" id="GO:0005788">
    <property type="term" value="C:endoplasmic reticulum lumen"/>
    <property type="evidence" value="ECO:0000304"/>
    <property type="project" value="Reactome"/>
</dbReference>
<dbReference type="GO" id="GO:0005654">
    <property type="term" value="C:nucleoplasm"/>
    <property type="evidence" value="ECO:0000314"/>
    <property type="project" value="HPA"/>
</dbReference>
<dbReference type="GO" id="GO:0005886">
    <property type="term" value="C:plasma membrane"/>
    <property type="evidence" value="ECO:0000314"/>
    <property type="project" value="UniProtKB"/>
</dbReference>
<dbReference type="GO" id="GO:0019899">
    <property type="term" value="F:enzyme binding"/>
    <property type="evidence" value="ECO:0000353"/>
    <property type="project" value="UniProtKB"/>
</dbReference>
<dbReference type="GO" id="GO:0045747">
    <property type="term" value="P:positive regulation of Notch signaling pathway"/>
    <property type="evidence" value="ECO:0000315"/>
    <property type="project" value="UniProtKB"/>
</dbReference>
<dbReference type="GO" id="GO:0072659">
    <property type="term" value="P:protein localization to plasma membrane"/>
    <property type="evidence" value="ECO:0000315"/>
    <property type="project" value="UniProtKB"/>
</dbReference>
<dbReference type="GO" id="GO:0051604">
    <property type="term" value="P:protein maturation"/>
    <property type="evidence" value="ECO:0000315"/>
    <property type="project" value="UniProtKB"/>
</dbReference>
<dbReference type="GO" id="GO:0051043">
    <property type="term" value="P:regulation of membrane protein ectodomain proteolysis"/>
    <property type="evidence" value="ECO:0000314"/>
    <property type="project" value="UniProtKB"/>
</dbReference>
<dbReference type="CDD" id="cd03159">
    <property type="entry name" value="TM4SF9_like_LEL"/>
    <property type="match status" value="1"/>
</dbReference>
<dbReference type="FunFam" id="1.10.1450.10:FF:000001">
    <property type="entry name" value="Tetraspanin"/>
    <property type="match status" value="1"/>
</dbReference>
<dbReference type="Gene3D" id="1.10.1450.10">
    <property type="entry name" value="Tetraspanin"/>
    <property type="match status" value="1"/>
</dbReference>
<dbReference type="InterPro" id="IPR018499">
    <property type="entry name" value="Tetraspanin/Peripherin"/>
</dbReference>
<dbReference type="InterPro" id="IPR000301">
    <property type="entry name" value="Tetraspanin_animals"/>
</dbReference>
<dbReference type="InterPro" id="IPR018503">
    <property type="entry name" value="Tetraspanin_CS"/>
</dbReference>
<dbReference type="InterPro" id="IPR008952">
    <property type="entry name" value="Tetraspanin_EC2_sf"/>
</dbReference>
<dbReference type="PANTHER" id="PTHR19282">
    <property type="entry name" value="TETRASPANIN"/>
    <property type="match status" value="1"/>
</dbReference>
<dbReference type="PANTHER" id="PTHR19282:SF63">
    <property type="entry name" value="TETRASPANIN-5"/>
    <property type="match status" value="1"/>
</dbReference>
<dbReference type="Pfam" id="PF00335">
    <property type="entry name" value="Tetraspanin"/>
    <property type="match status" value="1"/>
</dbReference>
<dbReference type="PIRSF" id="PIRSF002419">
    <property type="entry name" value="Tetraspanin"/>
    <property type="match status" value="1"/>
</dbReference>
<dbReference type="PRINTS" id="PR00259">
    <property type="entry name" value="TMFOUR"/>
</dbReference>
<dbReference type="SUPFAM" id="SSF48652">
    <property type="entry name" value="Tetraspanin"/>
    <property type="match status" value="1"/>
</dbReference>
<dbReference type="PROSITE" id="PS00421">
    <property type="entry name" value="TM4_1"/>
    <property type="match status" value="1"/>
</dbReference>
<organism>
    <name type="scientific">Homo sapiens</name>
    <name type="common">Human</name>
    <dbReference type="NCBI Taxonomy" id="9606"/>
    <lineage>
        <taxon>Eukaryota</taxon>
        <taxon>Metazoa</taxon>
        <taxon>Chordata</taxon>
        <taxon>Craniata</taxon>
        <taxon>Vertebrata</taxon>
        <taxon>Euteleostomi</taxon>
        <taxon>Mammalia</taxon>
        <taxon>Eutheria</taxon>
        <taxon>Euarchontoglires</taxon>
        <taxon>Primates</taxon>
        <taxon>Haplorrhini</taxon>
        <taxon>Catarrhini</taxon>
        <taxon>Hominidae</taxon>
        <taxon>Homo</taxon>
    </lineage>
</organism>
<proteinExistence type="evidence at protein level"/>
<gene>
    <name evidence="8" type="primary">TSPAN5</name>
    <name type="synonym">TM4SF9</name>
</gene>
<evidence type="ECO:0000250" key="1">
    <source>
        <dbReference type="UniProtKB" id="O95858"/>
    </source>
</evidence>
<evidence type="ECO:0000255" key="2"/>
<evidence type="ECO:0000269" key="3">
    <source>
    </source>
</evidence>
<evidence type="ECO:0000269" key="4">
    <source>
    </source>
</evidence>
<evidence type="ECO:0000269" key="5">
    <source>
    </source>
</evidence>
<evidence type="ECO:0000269" key="6">
    <source>
    </source>
</evidence>
<evidence type="ECO:0000305" key="7"/>
<evidence type="ECO:0000312" key="8">
    <source>
        <dbReference type="HGNC" id="HGNC:17753"/>
    </source>
</evidence>
<name>TSN5_HUMAN</name>
<protein>
    <recommendedName>
        <fullName>Tetraspanin-5</fullName>
        <shortName>Tspan-5</shortName>
    </recommendedName>
    <alternativeName>
        <fullName>Tetraspan NET-4</fullName>
    </alternativeName>
    <alternativeName>
        <fullName>Transmembrane 4 superfamily member 9</fullName>
    </alternativeName>
</protein>
<accession>P62079</accession>
<accession>B2RDY2</accession>
<accession>O60628</accession>
<accession>O60746</accession>
<accession>Q6FHE5</accession>
<accession>Q9JLY1</accession>
<comment type="function">
    <text evidence="3 4 6">Part of TspanC8 subgroup, composed of 6 members that interact with the transmembrane metalloprotease ADAM10. This interaction is required for ADAM10 exit from the endoplasmic reticulum and for enzymatic maturation and trafficking to the cell surface as well as substrate specificity. Different TspanC8/ADAM10 complexes have distinct substrates (PubMed:26686862, PubMed:28600292, PubMed:37516108). Promotes ADAM10-mediated cleavage of CD44 (PubMed:26686862). Seems to regulate VE-cadherin expression in endothelial cells probably through interaction with ADAM10, promoting leukocyte transmigration (PubMed:28600292).</text>
</comment>
<comment type="subunit">
    <text evidence="3 5">Interacts with ADAM10; the interaction influences ADAM10 substrate specificity, endocytosis and turnover.</text>
</comment>
<comment type="interaction">
    <interactant intactId="EBI-20977525">
        <id>P62079</id>
    </interactant>
    <interactant intactId="EBI-1536151">
        <id>O14672</id>
        <label>ADAM10</label>
    </interactant>
    <organismsDiffer>false</organismsDiffer>
    <experiments>12</experiments>
</comment>
<comment type="subcellular location">
    <subcellularLocation>
        <location evidence="3 5">Cell membrane</location>
        <topology evidence="7">Multi-pass membrane protein</topology>
    </subcellularLocation>
</comment>
<comment type="PTM">
    <text evidence="5">Palmitoylated.</text>
</comment>
<comment type="similarity">
    <text evidence="7">Belongs to the tetraspanin (TM4SF) family.</text>
</comment>